<protein>
    <recommendedName>
        <fullName evidence="2">Eukaryotic translation initiation factor 3 subunit E</fullName>
        <shortName evidence="2">eIF3e</shortName>
    </recommendedName>
    <alternativeName>
        <fullName evidence="2">Eukaryotic translation initiation factor 3 subunit 6</fullName>
    </alternativeName>
</protein>
<accession>B4KY00</accession>
<proteinExistence type="inferred from homology"/>
<name>EIF3E_DROMO</name>
<organism>
    <name type="scientific">Drosophila mojavensis</name>
    <name type="common">Fruit fly</name>
    <dbReference type="NCBI Taxonomy" id="7230"/>
    <lineage>
        <taxon>Eukaryota</taxon>
        <taxon>Metazoa</taxon>
        <taxon>Ecdysozoa</taxon>
        <taxon>Arthropoda</taxon>
        <taxon>Hexapoda</taxon>
        <taxon>Insecta</taxon>
        <taxon>Pterygota</taxon>
        <taxon>Neoptera</taxon>
        <taxon>Endopterygota</taxon>
        <taxon>Diptera</taxon>
        <taxon>Brachycera</taxon>
        <taxon>Muscomorpha</taxon>
        <taxon>Ephydroidea</taxon>
        <taxon>Drosophilidae</taxon>
        <taxon>Drosophila</taxon>
    </lineage>
</organism>
<evidence type="ECO:0000250" key="1">
    <source>
        <dbReference type="UniProtKB" id="O77410"/>
    </source>
</evidence>
<evidence type="ECO:0000255" key="2">
    <source>
        <dbReference type="HAMAP-Rule" id="MF_03004"/>
    </source>
</evidence>
<evidence type="ECO:0000255" key="3">
    <source>
        <dbReference type="PROSITE-ProRule" id="PRU01185"/>
    </source>
</evidence>
<gene>
    <name type="primary">eIF3-S6</name>
    <name type="synonym">Int6</name>
    <name type="ORF">GI11931</name>
</gene>
<feature type="chain" id="PRO_0000365966" description="Eukaryotic translation initiation factor 3 subunit E">
    <location>
        <begin position="1"/>
        <end position="434"/>
    </location>
</feature>
<feature type="domain" description="PCI" evidence="3">
    <location>
        <begin position="219"/>
        <end position="392"/>
    </location>
</feature>
<comment type="function">
    <text evidence="2">Component of the eukaryotic translation initiation factor 3 (eIF-3) complex, which is involved in protein synthesis of a specialized repertoire of mRNAs and, together with other initiation factors, stimulates binding of mRNA and methionyl-tRNAi to the 40S ribosome. The eIF-3 complex specifically targets and initiates translation of a subset of mRNAs involved in cell proliferation.</text>
</comment>
<comment type="subunit">
    <text evidence="1 2">Component of the eukaryotic translation initiation factor 3 (eIF-3) complex. The eIF-3 complex interacts with pix. Interacts with mxt (By similarity).</text>
</comment>
<comment type="subcellular location">
    <subcellularLocation>
        <location evidence="2">Cytoplasm</location>
    </subcellularLocation>
</comment>
<comment type="similarity">
    <text evidence="2">Belongs to the eIF-3 subunit E family.</text>
</comment>
<reference key="1">
    <citation type="journal article" date="2007" name="Nature">
        <title>Evolution of genes and genomes on the Drosophila phylogeny.</title>
        <authorList>
            <consortium name="Drosophila 12 genomes consortium"/>
        </authorList>
    </citation>
    <scope>NUCLEOTIDE SEQUENCE [LARGE SCALE GENOMIC DNA]</scope>
    <source>
        <strain>Tucson 15081-1352.22</strain>
    </source>
</reference>
<dbReference type="EMBL" id="CH933809">
    <property type="protein sequence ID" value="EDW18702.1"/>
    <property type="molecule type" value="Genomic_DNA"/>
</dbReference>
<dbReference type="SMR" id="B4KY00"/>
<dbReference type="FunCoup" id="B4KY00">
    <property type="interactions" value="2521"/>
</dbReference>
<dbReference type="EnsemblMetazoa" id="FBtr0162656">
    <property type="protein sequence ID" value="FBpp0161148"/>
    <property type="gene ID" value="FBgn0134689"/>
</dbReference>
<dbReference type="EnsemblMetazoa" id="XM_002008190.4">
    <property type="protein sequence ID" value="XP_002008226.1"/>
    <property type="gene ID" value="LOC6582525"/>
</dbReference>
<dbReference type="GeneID" id="6582525"/>
<dbReference type="KEGG" id="dmo:Dmoj_GI11931"/>
<dbReference type="CTD" id="3646"/>
<dbReference type="eggNOG" id="KOG2758">
    <property type="taxonomic scope" value="Eukaryota"/>
</dbReference>
<dbReference type="HOGENOM" id="CLU_031132_0_0_1"/>
<dbReference type="InParanoid" id="B4KY00"/>
<dbReference type="OMA" id="NCPWILR"/>
<dbReference type="OrthoDB" id="417252at2759"/>
<dbReference type="PhylomeDB" id="B4KY00"/>
<dbReference type="Proteomes" id="UP000009192">
    <property type="component" value="Unassembled WGS sequence"/>
</dbReference>
<dbReference type="GO" id="GO:0016282">
    <property type="term" value="C:eukaryotic 43S preinitiation complex"/>
    <property type="evidence" value="ECO:0007669"/>
    <property type="project" value="UniProtKB-UniRule"/>
</dbReference>
<dbReference type="GO" id="GO:0033290">
    <property type="term" value="C:eukaryotic 48S preinitiation complex"/>
    <property type="evidence" value="ECO:0007669"/>
    <property type="project" value="UniProtKB-UniRule"/>
</dbReference>
<dbReference type="GO" id="GO:0071540">
    <property type="term" value="C:eukaryotic translation initiation factor 3 complex, eIF3e"/>
    <property type="evidence" value="ECO:0007669"/>
    <property type="project" value="UniProtKB-UniRule"/>
</dbReference>
<dbReference type="GO" id="GO:0043231">
    <property type="term" value="C:intracellular membrane-bounded organelle"/>
    <property type="evidence" value="ECO:0007669"/>
    <property type="project" value="EnsemblMetazoa"/>
</dbReference>
<dbReference type="GO" id="GO:0003743">
    <property type="term" value="F:translation initiation factor activity"/>
    <property type="evidence" value="ECO:0007669"/>
    <property type="project" value="UniProtKB-UniRule"/>
</dbReference>
<dbReference type="GO" id="GO:0001732">
    <property type="term" value="P:formation of cytoplasmic translation initiation complex"/>
    <property type="evidence" value="ECO:0007669"/>
    <property type="project" value="UniProtKB-UniRule"/>
</dbReference>
<dbReference type="CDD" id="cd21378">
    <property type="entry name" value="eIF3E"/>
    <property type="match status" value="1"/>
</dbReference>
<dbReference type="HAMAP" id="MF_03004">
    <property type="entry name" value="eIF3e"/>
    <property type="match status" value="1"/>
</dbReference>
<dbReference type="InterPro" id="IPR016650">
    <property type="entry name" value="eIF3e"/>
</dbReference>
<dbReference type="InterPro" id="IPR019010">
    <property type="entry name" value="eIF3e_N"/>
</dbReference>
<dbReference type="InterPro" id="IPR000717">
    <property type="entry name" value="PCI_dom"/>
</dbReference>
<dbReference type="InterPro" id="IPR036390">
    <property type="entry name" value="WH_DNA-bd_sf"/>
</dbReference>
<dbReference type="PANTHER" id="PTHR10317">
    <property type="entry name" value="EUKARYOTIC TRANSLATION INITIATION FACTOR 3 SUBUNIT E"/>
    <property type="match status" value="1"/>
</dbReference>
<dbReference type="Pfam" id="PF09440">
    <property type="entry name" value="eIF3_N"/>
    <property type="match status" value="1"/>
</dbReference>
<dbReference type="Pfam" id="PF01399">
    <property type="entry name" value="PCI"/>
    <property type="match status" value="1"/>
</dbReference>
<dbReference type="PIRSF" id="PIRSF016255">
    <property type="entry name" value="eIF3e_su6"/>
    <property type="match status" value="1"/>
</dbReference>
<dbReference type="SMART" id="SM01186">
    <property type="entry name" value="eIF3_N"/>
    <property type="match status" value="1"/>
</dbReference>
<dbReference type="SMART" id="SM00088">
    <property type="entry name" value="PINT"/>
    <property type="match status" value="1"/>
</dbReference>
<dbReference type="SUPFAM" id="SSF46785">
    <property type="entry name" value="Winged helix' DNA-binding domain"/>
    <property type="match status" value="1"/>
</dbReference>
<dbReference type="PROSITE" id="PS50250">
    <property type="entry name" value="PCI"/>
    <property type="match status" value="1"/>
</dbReference>
<sequence>MAQFDLTRINCQYLDRHLTFPLLEFLCGKEIYNQQELLEYILETVNKTNMIDYTMDTRKRLNLSQEMPEELVQRKAEVLATLKQLQNEVAPIMKATDILKNGESMKDSKTFVNALQKDYNFKVEHLESAYKLAKYLYECGNYQESTSYLYFCLIVMSPNDKNYLNVLWGKLAAEILTLNWNTALEDLTRLRDYIDSANFSTIQALQQRTWLIHWSVLVFFNHPKGRDLIIEMFLYKPLYLNAIQTMCPHIMRYLATAVVINRTRRNALKDLIKVIQQESYTYRDPITEFLECLYVNFDFEGARLKLHECQTVILNDFFIVACLNEFVEDARLMIFETFCRIHQCITISMLADKLNMKPNEAECWIVNLIRNARLNAKIDSKLGHVVMGTQPLSPYQQLVEKIDSLSMRSEHLAGLIERKSKQKNQESIDSWKYY</sequence>
<keyword id="KW-0963">Cytoplasm</keyword>
<keyword id="KW-0396">Initiation factor</keyword>
<keyword id="KW-0648">Protein biosynthesis</keyword>
<keyword id="KW-1185">Reference proteome</keyword>